<keyword id="KW-0025">Alternative splicing</keyword>
<keyword id="KW-0028">Amino-acid biosynthesis</keyword>
<keyword id="KW-0032">Aminotransferase</keyword>
<keyword id="KW-0100">Branched-chain amino acid biosynthesis</keyword>
<keyword id="KW-0150">Chloroplast</keyword>
<keyword id="KW-0934">Plastid</keyword>
<keyword id="KW-0663">Pyridoxal phosphate</keyword>
<keyword id="KW-1185">Reference proteome</keyword>
<keyword id="KW-0808">Transferase</keyword>
<keyword id="KW-0809">Transit peptide</keyword>
<comment type="function">
    <text evidence="1">Converts 2-oxo acids to branched-chain amino acids. Acts on leucine, isoleucine and valine (By similarity).</text>
</comment>
<comment type="catalytic activity">
    <reaction>
        <text>L-leucine + 2-oxoglutarate = 4-methyl-2-oxopentanoate + L-glutamate</text>
        <dbReference type="Rhea" id="RHEA:18321"/>
        <dbReference type="ChEBI" id="CHEBI:16810"/>
        <dbReference type="ChEBI" id="CHEBI:17865"/>
        <dbReference type="ChEBI" id="CHEBI:29985"/>
        <dbReference type="ChEBI" id="CHEBI:57427"/>
        <dbReference type="EC" id="2.6.1.42"/>
    </reaction>
</comment>
<comment type="catalytic activity">
    <reaction>
        <text>L-isoleucine + 2-oxoglutarate = (S)-3-methyl-2-oxopentanoate + L-glutamate</text>
        <dbReference type="Rhea" id="RHEA:24801"/>
        <dbReference type="ChEBI" id="CHEBI:16810"/>
        <dbReference type="ChEBI" id="CHEBI:29985"/>
        <dbReference type="ChEBI" id="CHEBI:35146"/>
        <dbReference type="ChEBI" id="CHEBI:58045"/>
        <dbReference type="EC" id="2.6.1.42"/>
    </reaction>
</comment>
<comment type="catalytic activity">
    <reaction>
        <text>L-valine + 2-oxoglutarate = 3-methyl-2-oxobutanoate + L-glutamate</text>
        <dbReference type="Rhea" id="RHEA:24813"/>
        <dbReference type="ChEBI" id="CHEBI:11851"/>
        <dbReference type="ChEBI" id="CHEBI:16810"/>
        <dbReference type="ChEBI" id="CHEBI:29985"/>
        <dbReference type="ChEBI" id="CHEBI:57762"/>
        <dbReference type="EC" id="2.6.1.42"/>
    </reaction>
</comment>
<comment type="cofactor">
    <cofactor>
        <name>pyridoxal 5'-phosphate</name>
        <dbReference type="ChEBI" id="CHEBI:597326"/>
    </cofactor>
</comment>
<comment type="pathway">
    <text>Amino-acid biosynthesis; L-isoleucine biosynthesis; L-isoleucine from 2-oxobutanoate: step 4/4.</text>
</comment>
<comment type="pathway">
    <text>Amino-acid biosynthesis; L-leucine biosynthesis; L-leucine from 3-methyl-2-oxobutanoate: step 4/4.</text>
</comment>
<comment type="pathway">
    <text>Amino-acid biosynthesis; L-valine biosynthesis; L-valine from pyruvate: step 4/4.</text>
</comment>
<comment type="subcellular location">
    <subcellularLocation>
        <location>Plastid</location>
        <location>Chloroplast</location>
    </subcellularLocation>
</comment>
<comment type="alternative products">
    <event type="alternative splicing"/>
    <isoform>
        <id>Q9FYA6-1</id>
        <name>1</name>
        <sequence type="displayed"/>
    </isoform>
    <text>A number of isoforms are produced. According to EST sequences.</text>
</comment>
<comment type="miscellaneous">
    <text>Branched-chain amino acids are synthesized in chloroplasts, whereas the degradation takes place in mitochondria.</text>
</comment>
<comment type="similarity">
    <text evidence="3">Belongs to the class-IV pyridoxal-phosphate-dependent aminotransferase family.</text>
</comment>
<comment type="sequence caution" evidence="3">
    <conflict type="erroneous gene model prediction">
        <sequence resource="EMBL-CDS" id="BAB10685"/>
    </conflict>
</comment>
<comment type="sequence caution" evidence="3">
    <conflict type="erroneous gene model prediction">
        <sequence resource="EMBL-CDS" id="CAA16682"/>
    </conflict>
    <text>The predicted gene has been split into 2 genes: At5g65780 and At5g65770.</text>
</comment>
<accession>Q9FYA6</accession>
<accession>O49539</accession>
<accession>Q9FLG9</accession>
<name>BCAT5_ARATH</name>
<organism>
    <name type="scientific">Arabidopsis thaliana</name>
    <name type="common">Mouse-ear cress</name>
    <dbReference type="NCBI Taxonomy" id="3702"/>
    <lineage>
        <taxon>Eukaryota</taxon>
        <taxon>Viridiplantae</taxon>
        <taxon>Streptophyta</taxon>
        <taxon>Embryophyta</taxon>
        <taxon>Tracheophyta</taxon>
        <taxon>Spermatophyta</taxon>
        <taxon>Magnoliopsida</taxon>
        <taxon>eudicotyledons</taxon>
        <taxon>Gunneridae</taxon>
        <taxon>Pentapetalae</taxon>
        <taxon>rosids</taxon>
        <taxon>malvids</taxon>
        <taxon>Brassicales</taxon>
        <taxon>Brassicaceae</taxon>
        <taxon>Camelineae</taxon>
        <taxon>Arabidopsis</taxon>
    </lineage>
</organism>
<reference key="1">
    <citation type="journal article" date="2002" name="Plant Physiol.">
        <title>The branched-chain amino acid transaminase gene family in Arabidopsis encodes plastid and mitochondrial proteins.</title>
        <authorList>
            <person name="Diebold R."/>
            <person name="Schuster J."/>
            <person name="Daschner K."/>
            <person name="Binder S."/>
        </authorList>
    </citation>
    <scope>NUCLEOTIDE SEQUENCE [MRNA]</scope>
    <scope>CHARACTERIZATION</scope>
    <source>
        <strain>cv. Columbia</strain>
    </source>
</reference>
<reference key="2">
    <citation type="journal article" date="1998" name="DNA Res.">
        <title>Structural analysis of Arabidopsis thaliana chromosome 5. IV. Sequence features of the regions of 1,456,315 bp covered by nineteen physically assigned P1 and TAC clones.</title>
        <authorList>
            <person name="Sato S."/>
            <person name="Kaneko T."/>
            <person name="Kotani H."/>
            <person name="Nakamura Y."/>
            <person name="Asamizu E."/>
            <person name="Miyajima N."/>
            <person name="Tabata S."/>
        </authorList>
    </citation>
    <scope>NUCLEOTIDE SEQUENCE [LARGE SCALE GENOMIC DNA]</scope>
    <source>
        <strain>cv. Columbia</strain>
    </source>
</reference>
<reference key="3">
    <citation type="journal article" date="2000" name="Nature">
        <title>Sequence and analysis of chromosome 5 of the plant Arabidopsis thaliana.</title>
        <authorList>
            <person name="Tabata S."/>
            <person name="Kaneko T."/>
            <person name="Nakamura Y."/>
            <person name="Kotani H."/>
            <person name="Kato T."/>
            <person name="Asamizu E."/>
            <person name="Miyajima N."/>
            <person name="Sasamoto S."/>
            <person name="Kimura T."/>
            <person name="Hosouchi T."/>
            <person name="Kawashima K."/>
            <person name="Kohara M."/>
            <person name="Matsumoto M."/>
            <person name="Matsuno A."/>
            <person name="Muraki A."/>
            <person name="Nakayama S."/>
            <person name="Nakazaki N."/>
            <person name="Naruo K."/>
            <person name="Okumura S."/>
            <person name="Shinpo S."/>
            <person name="Takeuchi C."/>
            <person name="Wada T."/>
            <person name="Watanabe A."/>
            <person name="Yamada M."/>
            <person name="Yasuda M."/>
            <person name="Sato S."/>
            <person name="de la Bastide M."/>
            <person name="Huang E."/>
            <person name="Spiegel L."/>
            <person name="Gnoj L."/>
            <person name="O'Shaughnessy A."/>
            <person name="Preston R."/>
            <person name="Habermann K."/>
            <person name="Murray J."/>
            <person name="Johnson D."/>
            <person name="Rohlfing T."/>
            <person name="Nelson J."/>
            <person name="Stoneking T."/>
            <person name="Pepin K."/>
            <person name="Spieth J."/>
            <person name="Sekhon M."/>
            <person name="Armstrong J."/>
            <person name="Becker M."/>
            <person name="Belter E."/>
            <person name="Cordum H."/>
            <person name="Cordes M."/>
            <person name="Courtney L."/>
            <person name="Courtney W."/>
            <person name="Dante M."/>
            <person name="Du H."/>
            <person name="Edwards J."/>
            <person name="Fryman J."/>
            <person name="Haakensen B."/>
            <person name="Lamar E."/>
            <person name="Latreille P."/>
            <person name="Leonard S."/>
            <person name="Meyer R."/>
            <person name="Mulvaney E."/>
            <person name="Ozersky P."/>
            <person name="Riley A."/>
            <person name="Strowmatt C."/>
            <person name="Wagner-McPherson C."/>
            <person name="Wollam A."/>
            <person name="Yoakum M."/>
            <person name="Bell M."/>
            <person name="Dedhia N."/>
            <person name="Parnell L."/>
            <person name="Shah R."/>
            <person name="Rodriguez M."/>
            <person name="Hoon See L."/>
            <person name="Vil D."/>
            <person name="Baker J."/>
            <person name="Kirchoff K."/>
            <person name="Toth K."/>
            <person name="King L."/>
            <person name="Bahret A."/>
            <person name="Miller B."/>
            <person name="Marra M.A."/>
            <person name="Martienssen R."/>
            <person name="McCombie W.R."/>
            <person name="Wilson R.K."/>
            <person name="Murphy G."/>
            <person name="Bancroft I."/>
            <person name="Volckaert G."/>
            <person name="Wambutt R."/>
            <person name="Duesterhoeft A."/>
            <person name="Stiekema W."/>
            <person name="Pohl T."/>
            <person name="Entian K.-D."/>
            <person name="Terryn N."/>
            <person name="Hartley N."/>
            <person name="Bent E."/>
            <person name="Johnson S."/>
            <person name="Langham S.-A."/>
            <person name="McCullagh B."/>
            <person name="Robben J."/>
            <person name="Grymonprez B."/>
            <person name="Zimmermann W."/>
            <person name="Ramsperger U."/>
            <person name="Wedler H."/>
            <person name="Balke K."/>
            <person name="Wedler E."/>
            <person name="Peters S."/>
            <person name="van Staveren M."/>
            <person name="Dirkse W."/>
            <person name="Mooijman P."/>
            <person name="Klein Lankhorst R."/>
            <person name="Weitzenegger T."/>
            <person name="Bothe G."/>
            <person name="Rose M."/>
            <person name="Hauf J."/>
            <person name="Berneiser S."/>
            <person name="Hempel S."/>
            <person name="Feldpausch M."/>
            <person name="Lamberth S."/>
            <person name="Villarroel R."/>
            <person name="Gielen J."/>
            <person name="Ardiles W."/>
            <person name="Bents O."/>
            <person name="Lemcke K."/>
            <person name="Kolesov G."/>
            <person name="Mayer K.F.X."/>
            <person name="Rudd S."/>
            <person name="Schoof H."/>
            <person name="Schueller C."/>
            <person name="Zaccaria P."/>
            <person name="Mewes H.-W."/>
            <person name="Bevan M."/>
            <person name="Fransz P.F."/>
        </authorList>
    </citation>
    <scope>NUCLEOTIDE SEQUENCE [LARGE SCALE GENOMIC DNA]</scope>
    <source>
        <strain>cv. Columbia</strain>
    </source>
</reference>
<reference key="4">
    <citation type="journal article" date="2017" name="Plant J.">
        <title>Araport11: a complete reannotation of the Arabidopsis thaliana reference genome.</title>
        <authorList>
            <person name="Cheng C.Y."/>
            <person name="Krishnakumar V."/>
            <person name="Chan A.P."/>
            <person name="Thibaud-Nissen F."/>
            <person name="Schobel S."/>
            <person name="Town C.D."/>
        </authorList>
    </citation>
    <scope>GENOME REANNOTATION</scope>
    <source>
        <strain>cv. Columbia</strain>
    </source>
</reference>
<evidence type="ECO:0000250" key="1"/>
<evidence type="ECO:0000255" key="2"/>
<evidence type="ECO:0000305" key="3"/>
<protein>
    <recommendedName>
        <fullName>Branched-chain-amino-acid aminotransferase 5, chloroplastic</fullName>
        <shortName>Atbcat-5</shortName>
        <ecNumber>2.6.1.42</ecNumber>
    </recommendedName>
</protein>
<feature type="transit peptide" description="Chloroplast" evidence="2">
    <location>
        <begin position="1"/>
        <end position="65"/>
    </location>
</feature>
<feature type="chain" id="PRO_0000001278" description="Branched-chain-amino-acid aminotransferase 5, chloroplastic">
    <location>
        <begin position="66"/>
        <end position="415"/>
    </location>
</feature>
<feature type="modified residue" description="N6-(pyridoxal phosphate)lysine" evidence="1">
    <location>
        <position position="261"/>
    </location>
</feature>
<proteinExistence type="evidence at protein level"/>
<dbReference type="EC" id="2.6.1.42"/>
<dbReference type="EMBL" id="AJ293804">
    <property type="protein sequence ID" value="CAC03680.1"/>
    <property type="molecule type" value="mRNA"/>
</dbReference>
<dbReference type="EMBL" id="AB010075">
    <property type="protein sequence ID" value="BAB10685.1"/>
    <property type="status" value="ALT_SEQ"/>
    <property type="molecule type" value="Genomic_DNA"/>
</dbReference>
<dbReference type="EMBL" id="AL021684">
    <property type="protein sequence ID" value="CAA16682.1"/>
    <property type="status" value="ALT_SEQ"/>
    <property type="molecule type" value="Genomic_DNA"/>
</dbReference>
<dbReference type="EMBL" id="CP002688">
    <property type="protein sequence ID" value="AED98106.1"/>
    <property type="molecule type" value="Genomic_DNA"/>
</dbReference>
<dbReference type="RefSeq" id="NP_201379.2">
    <molecule id="Q9FYA6-1"/>
    <property type="nucleotide sequence ID" value="NM_125975.8"/>
</dbReference>
<dbReference type="SMR" id="Q9FYA6"/>
<dbReference type="BioGRID" id="21949">
    <property type="interactions" value="3"/>
</dbReference>
<dbReference type="FunCoup" id="Q9FYA6">
    <property type="interactions" value="3019"/>
</dbReference>
<dbReference type="STRING" id="3702.Q9FYA6"/>
<dbReference type="GlyGen" id="Q9FYA6">
    <property type="glycosylation" value="1 site"/>
</dbReference>
<dbReference type="iPTMnet" id="Q9FYA6"/>
<dbReference type="ProteomicsDB" id="240717">
    <molecule id="Q9FYA6-1"/>
</dbReference>
<dbReference type="EnsemblPlants" id="AT5G65780.1">
    <molecule id="Q9FYA6-1"/>
    <property type="protein sequence ID" value="AT5G65780.1"/>
    <property type="gene ID" value="AT5G65780"/>
</dbReference>
<dbReference type="GeneID" id="836707"/>
<dbReference type="Gramene" id="AT5G65780.1">
    <molecule id="Q9FYA6-1"/>
    <property type="protein sequence ID" value="AT5G65780.1"/>
    <property type="gene ID" value="AT5G65780"/>
</dbReference>
<dbReference type="KEGG" id="ath:AT5G65780"/>
<dbReference type="Araport" id="AT5G65780"/>
<dbReference type="TAIR" id="AT5G65780">
    <property type="gene designation" value="ATBCAT-5"/>
</dbReference>
<dbReference type="HOGENOM" id="CLU_031922_4_0_1"/>
<dbReference type="InParanoid" id="Q9FYA6"/>
<dbReference type="OrthoDB" id="409992at2759"/>
<dbReference type="PhylomeDB" id="Q9FYA6"/>
<dbReference type="BRENDA" id="2.6.1.42">
    <property type="organism ID" value="399"/>
</dbReference>
<dbReference type="UniPathway" id="UPA00047">
    <property type="reaction ID" value="UER00058"/>
</dbReference>
<dbReference type="UniPathway" id="UPA00048">
    <property type="reaction ID" value="UER00073"/>
</dbReference>
<dbReference type="UniPathway" id="UPA00049">
    <property type="reaction ID" value="UER00062"/>
</dbReference>
<dbReference type="PRO" id="PR:Q9FYA6"/>
<dbReference type="Proteomes" id="UP000006548">
    <property type="component" value="Chromosome 5"/>
</dbReference>
<dbReference type="ExpressionAtlas" id="Q9FYA6">
    <property type="expression patterns" value="baseline and differential"/>
</dbReference>
<dbReference type="GO" id="GO:0009507">
    <property type="term" value="C:chloroplast"/>
    <property type="evidence" value="ECO:0007669"/>
    <property type="project" value="UniProtKB-SubCell"/>
</dbReference>
<dbReference type="GO" id="GO:0052656">
    <property type="term" value="F:L-isoleucine-2-oxoglutarate transaminase activity"/>
    <property type="evidence" value="ECO:0007669"/>
    <property type="project" value="RHEA"/>
</dbReference>
<dbReference type="GO" id="GO:0052654">
    <property type="term" value="F:L-leucine-2-oxoglutarate transaminase activity"/>
    <property type="evidence" value="ECO:0007669"/>
    <property type="project" value="RHEA"/>
</dbReference>
<dbReference type="GO" id="GO:0052655">
    <property type="term" value="F:L-valine-2-oxoglutarate transaminase activity"/>
    <property type="evidence" value="ECO:0007669"/>
    <property type="project" value="RHEA"/>
</dbReference>
<dbReference type="GO" id="GO:0009097">
    <property type="term" value="P:isoleucine biosynthetic process"/>
    <property type="evidence" value="ECO:0007669"/>
    <property type="project" value="UniProtKB-UniPathway"/>
</dbReference>
<dbReference type="GO" id="GO:0009098">
    <property type="term" value="P:L-leucine biosynthetic process"/>
    <property type="evidence" value="ECO:0007669"/>
    <property type="project" value="UniProtKB-UniPathway"/>
</dbReference>
<dbReference type="GO" id="GO:0009099">
    <property type="term" value="P:L-valine biosynthetic process"/>
    <property type="evidence" value="ECO:0007669"/>
    <property type="project" value="UniProtKB-UniPathway"/>
</dbReference>
<dbReference type="CDD" id="cd01557">
    <property type="entry name" value="BCAT_beta_family"/>
    <property type="match status" value="1"/>
</dbReference>
<dbReference type="FunFam" id="3.20.10.10:FF:000003">
    <property type="entry name" value="Branched-chain-amino-acid aminotransferase"/>
    <property type="match status" value="1"/>
</dbReference>
<dbReference type="FunFam" id="3.30.470.10:FF:000003">
    <property type="entry name" value="Branched-chain-amino-acid aminotransferase"/>
    <property type="match status" value="1"/>
</dbReference>
<dbReference type="Gene3D" id="3.30.470.10">
    <property type="match status" value="1"/>
</dbReference>
<dbReference type="Gene3D" id="3.20.10.10">
    <property type="entry name" value="D-amino Acid Aminotransferase, subunit A, domain 2"/>
    <property type="match status" value="1"/>
</dbReference>
<dbReference type="InterPro" id="IPR001544">
    <property type="entry name" value="Aminotrans_IV"/>
</dbReference>
<dbReference type="InterPro" id="IPR018300">
    <property type="entry name" value="Aminotrans_IV_CS"/>
</dbReference>
<dbReference type="InterPro" id="IPR036038">
    <property type="entry name" value="Aminotransferase-like"/>
</dbReference>
<dbReference type="InterPro" id="IPR005786">
    <property type="entry name" value="B_amino_transII"/>
</dbReference>
<dbReference type="InterPro" id="IPR043132">
    <property type="entry name" value="BCAT-like_C"/>
</dbReference>
<dbReference type="InterPro" id="IPR043131">
    <property type="entry name" value="BCAT-like_N"/>
</dbReference>
<dbReference type="InterPro" id="IPR033939">
    <property type="entry name" value="BCAT_family"/>
</dbReference>
<dbReference type="NCBIfam" id="TIGR01123">
    <property type="entry name" value="ilvE_II"/>
    <property type="match status" value="1"/>
</dbReference>
<dbReference type="NCBIfam" id="NF009897">
    <property type="entry name" value="PRK13357.1"/>
    <property type="match status" value="1"/>
</dbReference>
<dbReference type="PANTHER" id="PTHR42825">
    <property type="entry name" value="AMINO ACID AMINOTRANSFERASE"/>
    <property type="match status" value="1"/>
</dbReference>
<dbReference type="PANTHER" id="PTHR42825:SF2">
    <property type="entry name" value="BRANCHED-CHAIN-AMINO-ACID AMINOTRANSFERASE 3, CHLOROPLASTIC-RELATED"/>
    <property type="match status" value="1"/>
</dbReference>
<dbReference type="Pfam" id="PF01063">
    <property type="entry name" value="Aminotran_4"/>
    <property type="match status" value="1"/>
</dbReference>
<dbReference type="PIRSF" id="PIRSF006468">
    <property type="entry name" value="BCAT1"/>
    <property type="match status" value="1"/>
</dbReference>
<dbReference type="SUPFAM" id="SSF56752">
    <property type="entry name" value="D-aminoacid aminotransferase-like PLP-dependent enzymes"/>
    <property type="match status" value="1"/>
</dbReference>
<dbReference type="PROSITE" id="PS00770">
    <property type="entry name" value="AA_TRANSFER_CLASS_4"/>
    <property type="match status" value="1"/>
</dbReference>
<sequence>MERSAVASGFHRNYILCASRAATSTTRLHSLSSLRNFPSSSLRIRHCPSPISSNFIVSEVSRNRRCDAVSSSTTDVTELAEIDWDKIDFGLKPTDYMYAMKCSRDGEFSQGQLQPFGNIDINPAAGVLNYGQGLFEGLKAYRKQDGNILLFRPEENAIRMRNGAERMCMPSPTVEQFVEAVKTTVLANKRWIPPPGKGSLYIRPLLMGTGAVLGLAPAPEYTFLIFVSPVGNYFKEGVAPINLIVETEFHRATPGGTGGVKTIGNYAAVLKAQSIAKAKGYSDVLYLDCLHKRYLEEVSSCNIFIVKDNVISTPEIKGTILPGITRKSIIEVARSQGFKVEERNVTVDELVEADEVFCTGTAVVLSPVGSITYKSQRFSYGEDGFGTVSKQLYTSLTSLQMGLSEDNMNWTVQLS</sequence>
<gene>
    <name type="primary">BCAT5</name>
    <name type="ordered locus">At5g65780</name>
    <name type="ORF">F6H11.110</name>
    <name type="ORF">MPA24.13</name>
</gene>